<evidence type="ECO:0000255" key="1">
    <source>
        <dbReference type="HAMAP-Rule" id="MF_00003"/>
    </source>
</evidence>
<evidence type="ECO:0000305" key="2"/>
<feature type="chain" id="PRO_0000411480" description="Ribosome-binding factor A">
    <location>
        <begin position="1"/>
        <end position="116"/>
    </location>
</feature>
<gene>
    <name evidence="1" type="primary">rbfA</name>
    <name type="ordered locus">SPs0373</name>
</gene>
<name>RBFA_STRPQ</name>
<proteinExistence type="inferred from homology"/>
<organism>
    <name type="scientific">Streptococcus pyogenes serotype M3 (strain SSI-1)</name>
    <dbReference type="NCBI Taxonomy" id="193567"/>
    <lineage>
        <taxon>Bacteria</taxon>
        <taxon>Bacillati</taxon>
        <taxon>Bacillota</taxon>
        <taxon>Bacilli</taxon>
        <taxon>Lactobacillales</taxon>
        <taxon>Streptococcaceae</taxon>
        <taxon>Streptococcus</taxon>
    </lineage>
</organism>
<keyword id="KW-0963">Cytoplasm</keyword>
<keyword id="KW-0690">Ribosome biogenesis</keyword>
<comment type="function">
    <text evidence="1">One of several proteins that assist in the late maturation steps of the functional core of the 30S ribosomal subunit. Associates with free 30S ribosomal subunits (but not with 30S subunits that are part of 70S ribosomes or polysomes). Required for efficient processing of 16S rRNA. May interact with the 5'-terminal helix region of 16S rRNA.</text>
</comment>
<comment type="subunit">
    <text evidence="1">Monomer. Binds 30S ribosomal subunits, but not 50S ribosomal subunits or 70S ribosomes.</text>
</comment>
<comment type="subcellular location">
    <subcellularLocation>
        <location evidence="1">Cytoplasm</location>
    </subcellularLocation>
</comment>
<comment type="similarity">
    <text evidence="1">Belongs to the RbfA family.</text>
</comment>
<comment type="sequence caution" evidence="2">
    <conflict type="erroneous initiation">
        <sequence resource="EMBL-CDS" id="BAC63468"/>
    </conflict>
    <text>Extended N-terminus.</text>
</comment>
<protein>
    <recommendedName>
        <fullName evidence="1">Ribosome-binding factor A</fullName>
    </recommendedName>
</protein>
<accession>P0DD81</accession>
<accession>P65972</accession>
<accession>Q99YG2</accession>
<reference key="1">
    <citation type="journal article" date="2003" name="Genome Res.">
        <title>Genome sequence of an M3 strain of Streptococcus pyogenes reveals a large-scale genomic rearrangement in invasive strains and new insights into phage evolution.</title>
        <authorList>
            <person name="Nakagawa I."/>
            <person name="Kurokawa K."/>
            <person name="Yamashita A."/>
            <person name="Nakata M."/>
            <person name="Tomiyasu Y."/>
            <person name="Okahashi N."/>
            <person name="Kawabata S."/>
            <person name="Yamazaki K."/>
            <person name="Shiba T."/>
            <person name="Yasunaga T."/>
            <person name="Hayashi H."/>
            <person name="Hattori M."/>
            <person name="Hamada S."/>
        </authorList>
    </citation>
    <scope>NUCLEOTIDE SEQUENCE [LARGE SCALE GENOMIC DNA]</scope>
    <source>
        <strain>SSI-1</strain>
    </source>
</reference>
<dbReference type="EMBL" id="BA000034">
    <property type="protein sequence ID" value="BAC63468.1"/>
    <property type="status" value="ALT_INIT"/>
    <property type="molecule type" value="Genomic_DNA"/>
</dbReference>
<dbReference type="RefSeq" id="WP_002994317.1">
    <property type="nucleotide sequence ID" value="NC_004606.1"/>
</dbReference>
<dbReference type="SMR" id="P0DD81"/>
<dbReference type="GeneID" id="83690071"/>
<dbReference type="KEGG" id="sps:SPs0373"/>
<dbReference type="HOGENOM" id="CLU_089475_3_0_9"/>
<dbReference type="GO" id="GO:0005829">
    <property type="term" value="C:cytosol"/>
    <property type="evidence" value="ECO:0007669"/>
    <property type="project" value="TreeGrafter"/>
</dbReference>
<dbReference type="GO" id="GO:0043024">
    <property type="term" value="F:ribosomal small subunit binding"/>
    <property type="evidence" value="ECO:0007669"/>
    <property type="project" value="TreeGrafter"/>
</dbReference>
<dbReference type="GO" id="GO:0030490">
    <property type="term" value="P:maturation of SSU-rRNA"/>
    <property type="evidence" value="ECO:0007669"/>
    <property type="project" value="UniProtKB-UniRule"/>
</dbReference>
<dbReference type="Gene3D" id="3.30.300.20">
    <property type="match status" value="1"/>
</dbReference>
<dbReference type="HAMAP" id="MF_00003">
    <property type="entry name" value="RbfA"/>
    <property type="match status" value="1"/>
</dbReference>
<dbReference type="InterPro" id="IPR015946">
    <property type="entry name" value="KH_dom-like_a/b"/>
</dbReference>
<dbReference type="InterPro" id="IPR000238">
    <property type="entry name" value="RbfA"/>
</dbReference>
<dbReference type="InterPro" id="IPR023799">
    <property type="entry name" value="RbfA_dom_sf"/>
</dbReference>
<dbReference type="InterPro" id="IPR020053">
    <property type="entry name" value="Ribosome-bd_factorA_CS"/>
</dbReference>
<dbReference type="NCBIfam" id="TIGR00082">
    <property type="entry name" value="rbfA"/>
    <property type="match status" value="1"/>
</dbReference>
<dbReference type="PANTHER" id="PTHR33515">
    <property type="entry name" value="RIBOSOME-BINDING FACTOR A, CHLOROPLASTIC-RELATED"/>
    <property type="match status" value="1"/>
</dbReference>
<dbReference type="PANTHER" id="PTHR33515:SF1">
    <property type="entry name" value="RIBOSOME-BINDING FACTOR A, CHLOROPLASTIC-RELATED"/>
    <property type="match status" value="1"/>
</dbReference>
<dbReference type="Pfam" id="PF02033">
    <property type="entry name" value="RBFA"/>
    <property type="match status" value="1"/>
</dbReference>
<dbReference type="SUPFAM" id="SSF89919">
    <property type="entry name" value="Ribosome-binding factor A, RbfA"/>
    <property type="match status" value="1"/>
</dbReference>
<dbReference type="PROSITE" id="PS01319">
    <property type="entry name" value="RBFA"/>
    <property type="match status" value="1"/>
</dbReference>
<sequence>MANHRIDRVGMEIKREVNDILQKKVRDPRVQGVTITEVQMQGDLSLAKVYYTIMSDLASDNQKAQTGLEKATGTIKRELGKQLTMYKIPDLVFEKDNSIAYGNKIDQLLRDLDNKS</sequence>